<proteinExistence type="inferred from homology"/>
<sequence length="433" mass="47574">MKSNLKHQSNDPNCKGVEILSIGTELLLGNIVNTNAQWISEELSTLGLNHFRQSTIGDNSERISKLIKEISSRSNLLITTGGLGPTPDDLTTEAIAKSFNATLSERGYLWDQIKKKLSISGSNFDRSSLKKQCFFPKDAQIINNPRGTAPGMIWKPIEGFTILTFPGVPSEMKEMWKETAVNYIKSNFSDGYIFFSNTLKFSGIGESTISEKINNLLKLKNPTVAPYANLGEVKLRLTARAKNELEARKIINPVKEKLKKEFSKFIFGEDDDNLSSVLIKELLKRKESLVFAESCTGGLLSSSITSIPGSSQVFKGSIISYSNNLKQSLLSVPENLIKKFGAVSEEVAETMAINAKEKLNSDWSIAISGIAGPSGGNKEKPVGLVYISIAGPNGHLTNIKKIFSSTRNRIEIQRLSVNVCLNSFRLILLSSSK</sequence>
<comment type="similarity">
    <text evidence="1">Belongs to the CinA family.</text>
</comment>
<organism>
    <name type="scientific">Prochlorococcus marinus subsp. pastoris (strain CCMP1986 / NIES-2087 / MED4)</name>
    <dbReference type="NCBI Taxonomy" id="59919"/>
    <lineage>
        <taxon>Bacteria</taxon>
        <taxon>Bacillati</taxon>
        <taxon>Cyanobacteriota</taxon>
        <taxon>Cyanophyceae</taxon>
        <taxon>Synechococcales</taxon>
        <taxon>Prochlorococcaceae</taxon>
        <taxon>Prochlorococcus</taxon>
    </lineage>
</organism>
<accession>Q7TUG2</accession>
<reference key="1">
    <citation type="journal article" date="2003" name="Nature">
        <title>Genome divergence in two Prochlorococcus ecotypes reflects oceanic niche differentiation.</title>
        <authorList>
            <person name="Rocap G."/>
            <person name="Larimer F.W."/>
            <person name="Lamerdin J.E."/>
            <person name="Malfatti S."/>
            <person name="Chain P."/>
            <person name="Ahlgren N.A."/>
            <person name="Arellano A."/>
            <person name="Coleman M."/>
            <person name="Hauser L."/>
            <person name="Hess W.R."/>
            <person name="Johnson Z.I."/>
            <person name="Land M.L."/>
            <person name="Lindell D."/>
            <person name="Post A.F."/>
            <person name="Regala W."/>
            <person name="Shah M."/>
            <person name="Shaw S.L."/>
            <person name="Steglich C."/>
            <person name="Sullivan M.B."/>
            <person name="Ting C.S."/>
            <person name="Tolonen A."/>
            <person name="Webb E.A."/>
            <person name="Zinser E.R."/>
            <person name="Chisholm S.W."/>
        </authorList>
    </citation>
    <scope>NUCLEOTIDE SEQUENCE [LARGE SCALE GENOMIC DNA]</scope>
    <source>
        <strain>CCMP1986 / NIES-2087 / MED4</strain>
    </source>
</reference>
<dbReference type="EMBL" id="BX548174">
    <property type="protein sequence ID" value="CAE18716.1"/>
    <property type="molecule type" value="Genomic_DNA"/>
</dbReference>
<dbReference type="RefSeq" id="WP_011131894.1">
    <property type="nucleotide sequence ID" value="NC_005072.1"/>
</dbReference>
<dbReference type="SMR" id="Q7TUG2"/>
<dbReference type="STRING" id="59919.PMM0257"/>
<dbReference type="KEGG" id="pmm:PMM0257"/>
<dbReference type="eggNOG" id="COG1058">
    <property type="taxonomic scope" value="Bacteria"/>
</dbReference>
<dbReference type="eggNOG" id="COG1546">
    <property type="taxonomic scope" value="Bacteria"/>
</dbReference>
<dbReference type="HOGENOM" id="CLU_030805_9_3_3"/>
<dbReference type="OrthoDB" id="9801454at2"/>
<dbReference type="Proteomes" id="UP000001026">
    <property type="component" value="Chromosome"/>
</dbReference>
<dbReference type="CDD" id="cd00885">
    <property type="entry name" value="cinA"/>
    <property type="match status" value="1"/>
</dbReference>
<dbReference type="Gene3D" id="3.30.70.2860">
    <property type="match status" value="1"/>
</dbReference>
<dbReference type="Gene3D" id="3.90.950.20">
    <property type="entry name" value="CinA-like"/>
    <property type="match status" value="1"/>
</dbReference>
<dbReference type="Gene3D" id="3.40.980.10">
    <property type="entry name" value="MoaB/Mog-like domain"/>
    <property type="match status" value="1"/>
</dbReference>
<dbReference type="HAMAP" id="MF_00226_B">
    <property type="entry name" value="CinA_B"/>
    <property type="match status" value="1"/>
</dbReference>
<dbReference type="InterPro" id="IPR050101">
    <property type="entry name" value="CinA"/>
</dbReference>
<dbReference type="InterPro" id="IPR036653">
    <property type="entry name" value="CinA-like_C"/>
</dbReference>
<dbReference type="InterPro" id="IPR008136">
    <property type="entry name" value="CinA_C"/>
</dbReference>
<dbReference type="InterPro" id="IPR041424">
    <property type="entry name" value="CinA_KH"/>
</dbReference>
<dbReference type="InterPro" id="IPR008135">
    <property type="entry name" value="Competence-induced_CinA"/>
</dbReference>
<dbReference type="InterPro" id="IPR036425">
    <property type="entry name" value="MoaB/Mog-like_dom_sf"/>
</dbReference>
<dbReference type="InterPro" id="IPR001453">
    <property type="entry name" value="MoaB/Mog_dom"/>
</dbReference>
<dbReference type="NCBIfam" id="TIGR00200">
    <property type="entry name" value="cinA_nterm"/>
    <property type="match status" value="1"/>
</dbReference>
<dbReference type="NCBIfam" id="TIGR00177">
    <property type="entry name" value="molyb_syn"/>
    <property type="match status" value="1"/>
</dbReference>
<dbReference type="NCBIfam" id="TIGR00199">
    <property type="entry name" value="PncC_domain"/>
    <property type="match status" value="1"/>
</dbReference>
<dbReference type="NCBIfam" id="NF001813">
    <property type="entry name" value="PRK00549.1"/>
    <property type="match status" value="1"/>
</dbReference>
<dbReference type="PANTHER" id="PTHR13939">
    <property type="entry name" value="NICOTINAMIDE-NUCLEOTIDE AMIDOHYDROLASE PNCC"/>
    <property type="match status" value="1"/>
</dbReference>
<dbReference type="PANTHER" id="PTHR13939:SF0">
    <property type="entry name" value="NMN AMIDOHYDROLASE-LIKE PROTEIN YFAY"/>
    <property type="match status" value="1"/>
</dbReference>
<dbReference type="Pfam" id="PF02464">
    <property type="entry name" value="CinA"/>
    <property type="match status" value="1"/>
</dbReference>
<dbReference type="Pfam" id="PF18146">
    <property type="entry name" value="CinA_KH"/>
    <property type="match status" value="1"/>
</dbReference>
<dbReference type="Pfam" id="PF00994">
    <property type="entry name" value="MoCF_biosynth"/>
    <property type="match status" value="1"/>
</dbReference>
<dbReference type="PIRSF" id="PIRSF006728">
    <property type="entry name" value="CinA"/>
    <property type="match status" value="1"/>
</dbReference>
<dbReference type="SMART" id="SM00852">
    <property type="entry name" value="MoCF_biosynth"/>
    <property type="match status" value="1"/>
</dbReference>
<dbReference type="SUPFAM" id="SSF142433">
    <property type="entry name" value="CinA-like"/>
    <property type="match status" value="1"/>
</dbReference>
<dbReference type="SUPFAM" id="SSF53218">
    <property type="entry name" value="Molybdenum cofactor biosynthesis proteins"/>
    <property type="match status" value="1"/>
</dbReference>
<gene>
    <name type="ordered locus">PMM0257</name>
</gene>
<protein>
    <recommendedName>
        <fullName evidence="1">CinA-like protein</fullName>
    </recommendedName>
</protein>
<feature type="chain" id="PRO_0000156774" description="CinA-like protein">
    <location>
        <begin position="1"/>
        <end position="433"/>
    </location>
</feature>
<name>CINAL_PROMP</name>
<evidence type="ECO:0000255" key="1">
    <source>
        <dbReference type="HAMAP-Rule" id="MF_00226"/>
    </source>
</evidence>